<comment type="catalytic activity">
    <reaction evidence="1">
        <text>2-formamido-N(1)-(5-O-phospho-beta-D-ribosyl)acetamidine + ATP = 5-amino-1-(5-phospho-beta-D-ribosyl)imidazole + ADP + phosphate + H(+)</text>
        <dbReference type="Rhea" id="RHEA:23032"/>
        <dbReference type="ChEBI" id="CHEBI:15378"/>
        <dbReference type="ChEBI" id="CHEBI:30616"/>
        <dbReference type="ChEBI" id="CHEBI:43474"/>
        <dbReference type="ChEBI" id="CHEBI:137981"/>
        <dbReference type="ChEBI" id="CHEBI:147287"/>
        <dbReference type="ChEBI" id="CHEBI:456216"/>
        <dbReference type="EC" id="6.3.3.1"/>
    </reaction>
</comment>
<comment type="pathway">
    <text evidence="1">Purine metabolism; IMP biosynthesis via de novo pathway; 5-amino-1-(5-phospho-D-ribosyl)imidazole from N(2)-formyl-N(1)-(5-phospho-D-ribosyl)glycinamide: step 2/2.</text>
</comment>
<comment type="subcellular location">
    <subcellularLocation>
        <location evidence="1">Cytoplasm</location>
    </subcellularLocation>
</comment>
<comment type="similarity">
    <text evidence="1">Belongs to the AIR synthase family.</text>
</comment>
<dbReference type="EC" id="6.3.3.1" evidence="1"/>
<dbReference type="EMBL" id="AM167904">
    <property type="protein sequence ID" value="CAJ48333.1"/>
    <property type="molecule type" value="Genomic_DNA"/>
</dbReference>
<dbReference type="RefSeq" id="WP_012416419.1">
    <property type="nucleotide sequence ID" value="NC_010645.1"/>
</dbReference>
<dbReference type="SMR" id="Q2KX26"/>
<dbReference type="STRING" id="360910.BAV0723"/>
<dbReference type="KEGG" id="bav:BAV0723"/>
<dbReference type="eggNOG" id="COG0150">
    <property type="taxonomic scope" value="Bacteria"/>
</dbReference>
<dbReference type="HOGENOM" id="CLU_047116_0_0_4"/>
<dbReference type="OrthoDB" id="9777881at2"/>
<dbReference type="UniPathway" id="UPA00074">
    <property type="reaction ID" value="UER00129"/>
</dbReference>
<dbReference type="Proteomes" id="UP000001977">
    <property type="component" value="Chromosome"/>
</dbReference>
<dbReference type="GO" id="GO:0005829">
    <property type="term" value="C:cytosol"/>
    <property type="evidence" value="ECO:0007669"/>
    <property type="project" value="TreeGrafter"/>
</dbReference>
<dbReference type="GO" id="GO:0005524">
    <property type="term" value="F:ATP binding"/>
    <property type="evidence" value="ECO:0007669"/>
    <property type="project" value="UniProtKB-KW"/>
</dbReference>
<dbReference type="GO" id="GO:0004637">
    <property type="term" value="F:phosphoribosylamine-glycine ligase activity"/>
    <property type="evidence" value="ECO:0007669"/>
    <property type="project" value="TreeGrafter"/>
</dbReference>
<dbReference type="GO" id="GO:0004641">
    <property type="term" value="F:phosphoribosylformylglycinamidine cyclo-ligase activity"/>
    <property type="evidence" value="ECO:0007669"/>
    <property type="project" value="UniProtKB-UniRule"/>
</dbReference>
<dbReference type="GO" id="GO:0006189">
    <property type="term" value="P:'de novo' IMP biosynthetic process"/>
    <property type="evidence" value="ECO:0007669"/>
    <property type="project" value="UniProtKB-UniRule"/>
</dbReference>
<dbReference type="GO" id="GO:0046084">
    <property type="term" value="P:adenine biosynthetic process"/>
    <property type="evidence" value="ECO:0007669"/>
    <property type="project" value="TreeGrafter"/>
</dbReference>
<dbReference type="CDD" id="cd02196">
    <property type="entry name" value="PurM"/>
    <property type="match status" value="1"/>
</dbReference>
<dbReference type="FunFam" id="3.30.1330.10:FF:000001">
    <property type="entry name" value="Phosphoribosylformylglycinamidine cyclo-ligase"/>
    <property type="match status" value="1"/>
</dbReference>
<dbReference type="FunFam" id="3.90.650.10:FF:000001">
    <property type="entry name" value="Phosphoribosylformylglycinamidine cyclo-ligase"/>
    <property type="match status" value="1"/>
</dbReference>
<dbReference type="Gene3D" id="3.90.650.10">
    <property type="entry name" value="PurM-like C-terminal domain"/>
    <property type="match status" value="1"/>
</dbReference>
<dbReference type="Gene3D" id="3.30.1330.10">
    <property type="entry name" value="PurM-like, N-terminal domain"/>
    <property type="match status" value="1"/>
</dbReference>
<dbReference type="HAMAP" id="MF_00741">
    <property type="entry name" value="AIRS"/>
    <property type="match status" value="1"/>
</dbReference>
<dbReference type="InterPro" id="IPR010918">
    <property type="entry name" value="PurM-like_C_dom"/>
</dbReference>
<dbReference type="InterPro" id="IPR036676">
    <property type="entry name" value="PurM-like_C_sf"/>
</dbReference>
<dbReference type="InterPro" id="IPR016188">
    <property type="entry name" value="PurM-like_N"/>
</dbReference>
<dbReference type="InterPro" id="IPR036921">
    <property type="entry name" value="PurM-like_N_sf"/>
</dbReference>
<dbReference type="InterPro" id="IPR004733">
    <property type="entry name" value="PurM_cligase"/>
</dbReference>
<dbReference type="NCBIfam" id="TIGR00878">
    <property type="entry name" value="purM"/>
    <property type="match status" value="1"/>
</dbReference>
<dbReference type="PANTHER" id="PTHR10520:SF12">
    <property type="entry name" value="TRIFUNCTIONAL PURINE BIOSYNTHETIC PROTEIN ADENOSINE-3"/>
    <property type="match status" value="1"/>
</dbReference>
<dbReference type="PANTHER" id="PTHR10520">
    <property type="entry name" value="TRIFUNCTIONAL PURINE BIOSYNTHETIC PROTEIN ADENOSINE-3-RELATED"/>
    <property type="match status" value="1"/>
</dbReference>
<dbReference type="Pfam" id="PF00586">
    <property type="entry name" value="AIRS"/>
    <property type="match status" value="1"/>
</dbReference>
<dbReference type="Pfam" id="PF02769">
    <property type="entry name" value="AIRS_C"/>
    <property type="match status" value="1"/>
</dbReference>
<dbReference type="SUPFAM" id="SSF56042">
    <property type="entry name" value="PurM C-terminal domain-like"/>
    <property type="match status" value="1"/>
</dbReference>
<dbReference type="SUPFAM" id="SSF55326">
    <property type="entry name" value="PurM N-terminal domain-like"/>
    <property type="match status" value="1"/>
</dbReference>
<sequence length="349" mass="36806">MTNEHSAPLTYRDAGVDIDAGDALVDRIKPLAARTMRPGVLAGIGGFGALFEVPKKYREPVLVSGTDGVGTKLRLAFDWNRHDTVGIDLVAMSVNDILVQGAEPLFFLDYFACGKLSVDTAAAVVGGIARGCELAGCALIGGETAEMPGMYPDGEYDLAGFAVGAVEKTAIIDGKSIQPGDVVLGLASSGAHSNGYSLVRKILERAGARPDQDFHGQPLVDVVMAPTRIYVKQVLAALAEHGTAIKGLAHITGGGLLDNVPRILQQGLSAKLYRDGWQMPQLFQWLQQQGAVADTEMYRVFNCGIGMVLVVAADQADAISATLRAQGEAVSRLGEIVPQQDGMAQTFVV</sequence>
<name>PUR5_BORA1</name>
<accession>Q2KX26</accession>
<proteinExistence type="inferred from homology"/>
<organism>
    <name type="scientific">Bordetella avium (strain 197N)</name>
    <dbReference type="NCBI Taxonomy" id="360910"/>
    <lineage>
        <taxon>Bacteria</taxon>
        <taxon>Pseudomonadati</taxon>
        <taxon>Pseudomonadota</taxon>
        <taxon>Betaproteobacteria</taxon>
        <taxon>Burkholderiales</taxon>
        <taxon>Alcaligenaceae</taxon>
        <taxon>Bordetella</taxon>
    </lineage>
</organism>
<evidence type="ECO:0000255" key="1">
    <source>
        <dbReference type="HAMAP-Rule" id="MF_00741"/>
    </source>
</evidence>
<gene>
    <name evidence="1" type="primary">purM</name>
    <name type="ordered locus">BAV0723</name>
</gene>
<reference key="1">
    <citation type="journal article" date="2006" name="J. Bacteriol.">
        <title>Comparison of the genome sequence of the poultry pathogen Bordetella avium with those of B. bronchiseptica, B. pertussis, and B. parapertussis reveals extensive diversity in surface structures associated with host interaction.</title>
        <authorList>
            <person name="Sebaihia M."/>
            <person name="Preston A."/>
            <person name="Maskell D.J."/>
            <person name="Kuzmiak H."/>
            <person name="Connell T.D."/>
            <person name="King N.D."/>
            <person name="Orndorff P.E."/>
            <person name="Miyamoto D.M."/>
            <person name="Thomson N.R."/>
            <person name="Harris D."/>
            <person name="Goble A."/>
            <person name="Lord A."/>
            <person name="Murphy L."/>
            <person name="Quail M.A."/>
            <person name="Rutter S."/>
            <person name="Squares R."/>
            <person name="Squares S."/>
            <person name="Woodward J."/>
            <person name="Parkhill J."/>
            <person name="Temple L.M."/>
        </authorList>
    </citation>
    <scope>NUCLEOTIDE SEQUENCE [LARGE SCALE GENOMIC DNA]</scope>
    <source>
        <strain>197N</strain>
    </source>
</reference>
<keyword id="KW-0067">ATP-binding</keyword>
<keyword id="KW-0963">Cytoplasm</keyword>
<keyword id="KW-0436">Ligase</keyword>
<keyword id="KW-0547">Nucleotide-binding</keyword>
<keyword id="KW-0658">Purine biosynthesis</keyword>
<keyword id="KW-1185">Reference proteome</keyword>
<feature type="chain" id="PRO_0000258335" description="Phosphoribosylformylglycinamidine cyclo-ligase">
    <location>
        <begin position="1"/>
        <end position="349"/>
    </location>
</feature>
<protein>
    <recommendedName>
        <fullName evidence="1">Phosphoribosylformylglycinamidine cyclo-ligase</fullName>
        <ecNumber evidence="1">6.3.3.1</ecNumber>
    </recommendedName>
    <alternativeName>
        <fullName evidence="1">AIR synthase</fullName>
    </alternativeName>
    <alternativeName>
        <fullName evidence="1">AIRS</fullName>
    </alternativeName>
    <alternativeName>
        <fullName evidence="1">Phosphoribosyl-aminoimidazole synthetase</fullName>
    </alternativeName>
</protein>